<accession>Q8XBW0</accession>
<gene>
    <name type="primary">hybE</name>
    <name type="ordered locus">Z4346</name>
    <name type="ordered locus">ECs3877</name>
</gene>
<organism>
    <name type="scientific">Escherichia coli O157:H7</name>
    <dbReference type="NCBI Taxonomy" id="83334"/>
    <lineage>
        <taxon>Bacteria</taxon>
        <taxon>Pseudomonadati</taxon>
        <taxon>Pseudomonadota</taxon>
        <taxon>Gammaproteobacteria</taxon>
        <taxon>Enterobacterales</taxon>
        <taxon>Enterobacteriaceae</taxon>
        <taxon>Escherichia</taxon>
    </lineage>
</organism>
<dbReference type="EMBL" id="AE005174">
    <property type="protein sequence ID" value="AAG58129.1"/>
    <property type="molecule type" value="Genomic_DNA"/>
</dbReference>
<dbReference type="EMBL" id="BA000007">
    <property type="protein sequence ID" value="BAB37300.1"/>
    <property type="molecule type" value="Genomic_DNA"/>
</dbReference>
<dbReference type="PIR" id="E85958">
    <property type="entry name" value="E85958"/>
</dbReference>
<dbReference type="PIR" id="E91113">
    <property type="entry name" value="E91113"/>
</dbReference>
<dbReference type="RefSeq" id="NP_311904.1">
    <property type="nucleotide sequence ID" value="NC_002695.1"/>
</dbReference>
<dbReference type="RefSeq" id="WP_000134002.1">
    <property type="nucleotide sequence ID" value="NZ_VOAI01000009.1"/>
</dbReference>
<dbReference type="BMRB" id="Q8XBW0"/>
<dbReference type="SMR" id="Q8XBW0"/>
<dbReference type="STRING" id="155864.Z4346"/>
<dbReference type="GeneID" id="916298"/>
<dbReference type="KEGG" id="ece:Z4346"/>
<dbReference type="KEGG" id="ecs:ECs_3877"/>
<dbReference type="PATRIC" id="fig|386585.9.peg.4044"/>
<dbReference type="eggNOG" id="COG1773">
    <property type="taxonomic scope" value="Bacteria"/>
</dbReference>
<dbReference type="HOGENOM" id="CLU_091699_2_0_6"/>
<dbReference type="OMA" id="LTPWMIS"/>
<dbReference type="Proteomes" id="UP000000558">
    <property type="component" value="Chromosome"/>
</dbReference>
<dbReference type="Proteomes" id="UP000002519">
    <property type="component" value="Chromosome"/>
</dbReference>
<dbReference type="Gene3D" id="3.30.1460.40">
    <property type="entry name" value="[NiFe]-hydrogenase assembly chaperone, HybE"/>
    <property type="match status" value="1"/>
</dbReference>
<dbReference type="InterPro" id="IPR023994">
    <property type="entry name" value="NiFe-hyd_HybE"/>
</dbReference>
<dbReference type="InterPro" id="IPR038530">
    <property type="entry name" value="NiFe-hyd_HybE_sf"/>
</dbReference>
<dbReference type="NCBIfam" id="TIGR03993">
    <property type="entry name" value="hydrog_HybE"/>
    <property type="match status" value="1"/>
</dbReference>
<dbReference type="NCBIfam" id="NF007776">
    <property type="entry name" value="PRK10465.1"/>
    <property type="match status" value="1"/>
</dbReference>
<dbReference type="Pfam" id="PF11939">
    <property type="entry name" value="NiFe-hyd_HybE"/>
    <property type="match status" value="1"/>
</dbReference>
<name>HYBE_ECO57</name>
<feature type="chain" id="PRO_0000201428" description="Hydrogenase-2 operon protein HybE">
    <location>
        <begin position="1"/>
        <end position="162"/>
    </location>
</feature>
<reference key="1">
    <citation type="journal article" date="2001" name="Nature">
        <title>Genome sequence of enterohaemorrhagic Escherichia coli O157:H7.</title>
        <authorList>
            <person name="Perna N.T."/>
            <person name="Plunkett G. III"/>
            <person name="Burland V."/>
            <person name="Mau B."/>
            <person name="Glasner J.D."/>
            <person name="Rose D.J."/>
            <person name="Mayhew G.F."/>
            <person name="Evans P.S."/>
            <person name="Gregor J."/>
            <person name="Kirkpatrick H.A."/>
            <person name="Posfai G."/>
            <person name="Hackett J."/>
            <person name="Klink S."/>
            <person name="Boutin A."/>
            <person name="Shao Y."/>
            <person name="Miller L."/>
            <person name="Grotbeck E.J."/>
            <person name="Davis N.W."/>
            <person name="Lim A."/>
            <person name="Dimalanta E.T."/>
            <person name="Potamousis K."/>
            <person name="Apodaca J."/>
            <person name="Anantharaman T.S."/>
            <person name="Lin J."/>
            <person name="Yen G."/>
            <person name="Schwartz D.C."/>
            <person name="Welch R.A."/>
            <person name="Blattner F.R."/>
        </authorList>
    </citation>
    <scope>NUCLEOTIDE SEQUENCE [LARGE SCALE GENOMIC DNA]</scope>
    <source>
        <strain>O157:H7 / EDL933 / ATCC 700927 / EHEC</strain>
    </source>
</reference>
<reference key="2">
    <citation type="journal article" date="2001" name="DNA Res.">
        <title>Complete genome sequence of enterohemorrhagic Escherichia coli O157:H7 and genomic comparison with a laboratory strain K-12.</title>
        <authorList>
            <person name="Hayashi T."/>
            <person name="Makino K."/>
            <person name="Ohnishi M."/>
            <person name="Kurokawa K."/>
            <person name="Ishii K."/>
            <person name="Yokoyama K."/>
            <person name="Han C.-G."/>
            <person name="Ohtsubo E."/>
            <person name="Nakayama K."/>
            <person name="Murata T."/>
            <person name="Tanaka M."/>
            <person name="Tobe T."/>
            <person name="Iida T."/>
            <person name="Takami H."/>
            <person name="Honda T."/>
            <person name="Sasakawa C."/>
            <person name="Ogasawara N."/>
            <person name="Yasunaga T."/>
            <person name="Kuhara S."/>
            <person name="Shiba T."/>
            <person name="Hattori M."/>
            <person name="Shinagawa H."/>
        </authorList>
    </citation>
    <scope>NUCLEOTIDE SEQUENCE [LARGE SCALE GENOMIC DNA]</scope>
    <source>
        <strain>O157:H7 / Sakai / RIMD 0509952 / EHEC</strain>
    </source>
</reference>
<evidence type="ECO:0000305" key="1"/>
<proteinExistence type="inferred from homology"/>
<comment type="similarity">
    <text evidence="1">Belongs to the HupJ family.</text>
</comment>
<keyword id="KW-1185">Reference proteome</keyword>
<protein>
    <recommendedName>
        <fullName>Hydrogenase-2 operon protein HybE</fullName>
    </recommendedName>
</protein>
<sequence>MTEEIAGFQTSPKAQVQAAFEEIARRSMHALSFLHPSMPVYVSDFTLFEGQWTGCVITPWMLSAVIFPGPDQLWPLRKVSEKIGLQLPYGTMTFTVGELDGVSQYLSCSLMSPLSHSMSIEEGQRLTDDCARMILSLPVTNPDVPHAGRRALLFGRRSGENA</sequence>